<reference key="1">
    <citation type="journal article" date="2004" name="Nature">
        <title>Sequence and comparative analysis of the chicken genome provide unique perspectives on vertebrate evolution.</title>
        <authorList>
            <person name="Hillier L.W."/>
            <person name="Miller W."/>
            <person name="Birney E."/>
            <person name="Warren W."/>
            <person name="Hardison R.C."/>
            <person name="Ponting C.P."/>
            <person name="Bork P."/>
            <person name="Burt D.W."/>
            <person name="Groenen M.A.M."/>
            <person name="Delany M.E."/>
            <person name="Dodgson J.B."/>
            <person name="Chinwalla A.T."/>
            <person name="Cliften P.F."/>
            <person name="Clifton S.W."/>
            <person name="Delehaunty K.D."/>
            <person name="Fronick C."/>
            <person name="Fulton R.S."/>
            <person name="Graves T.A."/>
            <person name="Kremitzki C."/>
            <person name="Layman D."/>
            <person name="Magrini V."/>
            <person name="McPherson J.D."/>
            <person name="Miner T.L."/>
            <person name="Minx P."/>
            <person name="Nash W.E."/>
            <person name="Nhan M.N."/>
            <person name="Nelson J.O."/>
            <person name="Oddy L.G."/>
            <person name="Pohl C.S."/>
            <person name="Randall-Maher J."/>
            <person name="Smith S.M."/>
            <person name="Wallis J.W."/>
            <person name="Yang S.-P."/>
            <person name="Romanov M.N."/>
            <person name="Rondelli C.M."/>
            <person name="Paton B."/>
            <person name="Smith J."/>
            <person name="Morrice D."/>
            <person name="Daniels L."/>
            <person name="Tempest H.G."/>
            <person name="Robertson L."/>
            <person name="Masabanda J.S."/>
            <person name="Griffin D.K."/>
            <person name="Vignal A."/>
            <person name="Fillon V."/>
            <person name="Jacobbson L."/>
            <person name="Kerje S."/>
            <person name="Andersson L."/>
            <person name="Crooijmans R.P."/>
            <person name="Aerts J."/>
            <person name="van der Poel J.J."/>
            <person name="Ellegren H."/>
            <person name="Caldwell R.B."/>
            <person name="Hubbard S.J."/>
            <person name="Grafham D.V."/>
            <person name="Kierzek A.M."/>
            <person name="McLaren S.R."/>
            <person name="Overton I.M."/>
            <person name="Arakawa H."/>
            <person name="Beattie K.J."/>
            <person name="Bezzubov Y."/>
            <person name="Boardman P.E."/>
            <person name="Bonfield J.K."/>
            <person name="Croning M.D.R."/>
            <person name="Davies R.M."/>
            <person name="Francis M.D."/>
            <person name="Humphray S.J."/>
            <person name="Scott C.E."/>
            <person name="Taylor R.G."/>
            <person name="Tickle C."/>
            <person name="Brown W.R.A."/>
            <person name="Rogers J."/>
            <person name="Buerstedde J.-M."/>
            <person name="Wilson S.A."/>
            <person name="Stubbs L."/>
            <person name="Ovcharenko I."/>
            <person name="Gordon L."/>
            <person name="Lucas S."/>
            <person name="Miller M.M."/>
            <person name="Inoko H."/>
            <person name="Shiina T."/>
            <person name="Kaufman J."/>
            <person name="Salomonsen J."/>
            <person name="Skjoedt K."/>
            <person name="Wong G.K.-S."/>
            <person name="Wang J."/>
            <person name="Liu B."/>
            <person name="Wang J."/>
            <person name="Yu J."/>
            <person name="Yang H."/>
            <person name="Nefedov M."/>
            <person name="Koriabine M."/>
            <person name="Dejong P.J."/>
            <person name="Goodstadt L."/>
            <person name="Webber C."/>
            <person name="Dickens N.J."/>
            <person name="Letunic I."/>
            <person name="Suyama M."/>
            <person name="Torrents D."/>
            <person name="von Mering C."/>
            <person name="Zdobnov E.M."/>
            <person name="Makova K."/>
            <person name="Nekrutenko A."/>
            <person name="Elnitski L."/>
            <person name="Eswara P."/>
            <person name="King D.C."/>
            <person name="Yang S.-P."/>
            <person name="Tyekucheva S."/>
            <person name="Radakrishnan A."/>
            <person name="Harris R.S."/>
            <person name="Chiaromonte F."/>
            <person name="Taylor J."/>
            <person name="He J."/>
            <person name="Rijnkels M."/>
            <person name="Griffiths-Jones S."/>
            <person name="Ureta-Vidal A."/>
            <person name="Hoffman M.M."/>
            <person name="Severin J."/>
            <person name="Searle S.M.J."/>
            <person name="Law A.S."/>
            <person name="Speed D."/>
            <person name="Waddington D."/>
            <person name="Cheng Z."/>
            <person name="Tuzun E."/>
            <person name="Eichler E."/>
            <person name="Bao Z."/>
            <person name="Flicek P."/>
            <person name="Shteynberg D.D."/>
            <person name="Brent M.R."/>
            <person name="Bye J.M."/>
            <person name="Huckle E.J."/>
            <person name="Chatterji S."/>
            <person name="Dewey C."/>
            <person name="Pachter L."/>
            <person name="Kouranov A."/>
            <person name="Mourelatos Z."/>
            <person name="Hatzigeorgiou A.G."/>
            <person name="Paterson A.H."/>
            <person name="Ivarie R."/>
            <person name="Brandstrom M."/>
            <person name="Axelsson E."/>
            <person name="Backstrom N."/>
            <person name="Berlin S."/>
            <person name="Webster M.T."/>
            <person name="Pourquie O."/>
            <person name="Reymond A."/>
            <person name="Ucla C."/>
            <person name="Antonarakis S.E."/>
            <person name="Long M."/>
            <person name="Emerson J.J."/>
            <person name="Betran E."/>
            <person name="Dupanloup I."/>
            <person name="Kaessmann H."/>
            <person name="Hinrichs A.S."/>
            <person name="Bejerano G."/>
            <person name="Furey T.S."/>
            <person name="Harte R.A."/>
            <person name="Raney B."/>
            <person name="Siepel A."/>
            <person name="Kent W.J."/>
            <person name="Haussler D."/>
            <person name="Eyras E."/>
            <person name="Castelo R."/>
            <person name="Abril J.F."/>
            <person name="Castellano S."/>
            <person name="Camara F."/>
            <person name="Parra G."/>
            <person name="Guigo R."/>
            <person name="Bourque G."/>
            <person name="Tesler G."/>
            <person name="Pevzner P.A."/>
            <person name="Smit A."/>
            <person name="Fulton L.A."/>
            <person name="Mardis E.R."/>
            <person name="Wilson R.K."/>
        </authorList>
    </citation>
    <scope>NUCLEOTIDE SEQUENCE [LARGE SCALE GENOMIC DNA]</scope>
    <source>
        <strain>Red jungle fowl</strain>
    </source>
</reference>
<reference key="2">
    <citation type="journal article" date="2009" name="Cell">
        <title>The antioxidant enzyme Prdx1 controls neuronal differentiation by thiol-redox-dependent activation of GDE2.</title>
        <authorList>
            <person name="Yan Y."/>
            <person name="Sabharwal P."/>
            <person name="Rao M."/>
            <person name="Sockanathan S."/>
        </authorList>
    </citation>
    <scope>FUNCTION</scope>
    <scope>INTERACTION WITH GDPD5</scope>
    <scope>MUTAGENESIS OF CYS-52 AND CYS-173</scope>
</reference>
<evidence type="ECO:0000250" key="1">
    <source>
        <dbReference type="UniProtKB" id="Q06830"/>
    </source>
</evidence>
<evidence type="ECO:0000255" key="2">
    <source>
        <dbReference type="PROSITE-ProRule" id="PRU00691"/>
    </source>
</evidence>
<evidence type="ECO:0000269" key="3">
    <source>
    </source>
</evidence>
<evidence type="ECO:0000305" key="4"/>
<comment type="function">
    <text evidence="1 3">Thiol-specific peroxidase that catalyzes the reduction of hydrogen peroxide and organic hydroperoxides to water and alcohols, respectively. Plays a role in cell protection against oxidative stress by detoxifying peroxides and as sensor of hydrogen peroxide-mediated signaling events. Might participate in the signaling cascades of growth factors and tumor necrosis factor-alpha by regulating the intracellular concentrations of H(2)O(2) (By similarity). Reduces an intramolecular disulfide bond in GDPD5 that gates the ability to GDPD5 to drive postmitotic motor neuron differentiation (PubMed:19766572).</text>
</comment>
<comment type="catalytic activity">
    <reaction evidence="1">
        <text>a hydroperoxide + [thioredoxin]-dithiol = an alcohol + [thioredoxin]-disulfide + H2O</text>
        <dbReference type="Rhea" id="RHEA:62620"/>
        <dbReference type="Rhea" id="RHEA-COMP:10698"/>
        <dbReference type="Rhea" id="RHEA-COMP:10700"/>
        <dbReference type="ChEBI" id="CHEBI:15377"/>
        <dbReference type="ChEBI" id="CHEBI:29950"/>
        <dbReference type="ChEBI" id="CHEBI:30879"/>
        <dbReference type="ChEBI" id="CHEBI:35924"/>
        <dbReference type="ChEBI" id="CHEBI:50058"/>
        <dbReference type="EC" id="1.11.1.24"/>
    </reaction>
</comment>
<comment type="subunit">
    <text evidence="1 3">Homodimer; disulfide-linked, upon oxidation. 5 homodimers assemble to form a ring-like decamer (By similarity). Interacts with GDPD5; forms a mixed-disulfide with GDPD5 (PubMed:19766572). Interacts with SESN1 and SESN2 (By similarity).</text>
</comment>
<comment type="interaction">
    <interactant intactId="EBI-2464239">
        <id>P0CB50</id>
    </interactant>
    <interactant intactId="EBI-2464223">
        <id>Q3KTM2</id>
        <label>GDPD5</label>
    </interactant>
    <organismsDiffer>false</organismsDiffer>
    <experiments>5</experiments>
</comment>
<comment type="subcellular location">
    <subcellularLocation>
        <location evidence="1">Cytoplasm</location>
    </subcellularLocation>
</comment>
<comment type="PTM">
    <text evidence="1">The enzyme can be inactivated by further oxidation of the cysteine sulfenic acid (C(P)-SOH) to sulphinic acid (C(P)-SO2H) instead of its condensation to a disulfide bond. It can be reactivated by forming a transient disulfide bond with sulfiredoxin SRXN1, which reduces the cysteine sulfinic acid in an ATP- and Mg-dependent manner.</text>
</comment>
<comment type="miscellaneous">
    <text>Reduced levels of PRDX1 by RNAi cause the loss of motor neurons but did not alter the number of motor neuron progenitors or the dorsal-ventral pattering of spinal progenitors, and did not compromise motor neuron survival.</text>
</comment>
<comment type="miscellaneous">
    <text evidence="1">The active site is a conserved redox-active cysteine residue, the peroxidatic cysteine (C(P)), which makes the nucleophilic attack on the peroxide substrate. The peroxide oxidizes the C(P)-SH to cysteine sulfenic acid (C(P)-SOH), which then reacts with another cysteine residue, the resolving cysteine (C(R)), to form a disulfide bridge. The disulfide is subsequently reduced by an appropriate electron donor to complete the catalytic cycle. In this typical 2-Cys peroxiredoxin, C(R) is provided by the other dimeric subunit to form an intersubunit disulfide. The disulfide is subsequently reduced by thioredoxin.</text>
</comment>
<comment type="similarity">
    <text evidence="4">Belongs to the peroxiredoxin family. AhpC/Prx1 subfamily.</text>
</comment>
<name>PRDX1_CHICK</name>
<gene>
    <name type="primary">PRDX1</name>
</gene>
<keyword id="KW-0049">Antioxidant</keyword>
<keyword id="KW-0963">Cytoplasm</keyword>
<keyword id="KW-1015">Disulfide bond</keyword>
<keyword id="KW-0560">Oxidoreductase</keyword>
<keyword id="KW-0575">Peroxidase</keyword>
<keyword id="KW-0676">Redox-active center</keyword>
<keyword id="KW-1185">Reference proteome</keyword>
<dbReference type="EC" id="1.11.1.24" evidence="1"/>
<dbReference type="RefSeq" id="NP_001258861.1">
    <property type="nucleotide sequence ID" value="NM_001271932.2"/>
</dbReference>
<dbReference type="RefSeq" id="XP_046778755.1">
    <property type="nucleotide sequence ID" value="XM_046922799.1"/>
</dbReference>
<dbReference type="RefSeq" id="XP_046800449.1">
    <property type="nucleotide sequence ID" value="XM_046944493.1"/>
</dbReference>
<dbReference type="SMR" id="P0CB50"/>
<dbReference type="FunCoup" id="P0CB50">
    <property type="interactions" value="1845"/>
</dbReference>
<dbReference type="IntAct" id="P0CB50">
    <property type="interactions" value="1"/>
</dbReference>
<dbReference type="STRING" id="9031.ENSGALP00000048502"/>
<dbReference type="PaxDb" id="9031-ENSGALP00000016629"/>
<dbReference type="Ensembl" id="ENSGALT00010063648.1">
    <property type="protein sequence ID" value="ENSGALP00010039290.1"/>
    <property type="gene ID" value="ENSGALG00010026128.1"/>
</dbReference>
<dbReference type="GeneID" id="424598"/>
<dbReference type="KEGG" id="gga:424598"/>
<dbReference type="CTD" id="5052"/>
<dbReference type="VEuPathDB" id="HostDB:geneid_424598"/>
<dbReference type="eggNOG" id="KOG0852">
    <property type="taxonomic scope" value="Eukaryota"/>
</dbReference>
<dbReference type="GeneTree" id="ENSGT00940000154277"/>
<dbReference type="HOGENOM" id="CLU_042529_21_1_1"/>
<dbReference type="InParanoid" id="P0CB50"/>
<dbReference type="OMA" id="FWYPKDF"/>
<dbReference type="OrthoDB" id="185659at2759"/>
<dbReference type="PhylomeDB" id="P0CB50"/>
<dbReference type="Reactome" id="R-GGA-3299685">
    <property type="pathway name" value="Detoxification of Reactive Oxygen Species"/>
</dbReference>
<dbReference type="Reactome" id="R-GGA-5628897">
    <property type="pathway name" value="TP53 Regulates Metabolic Genes"/>
</dbReference>
<dbReference type="Reactome" id="R-GGA-9818027">
    <property type="pathway name" value="NFE2L2 regulating anti-oxidant/detoxification enzymes"/>
</dbReference>
<dbReference type="PRO" id="PR:P0CB50"/>
<dbReference type="Proteomes" id="UP000000539">
    <property type="component" value="Chromosome 8"/>
</dbReference>
<dbReference type="Bgee" id="ENSGALG00000010243">
    <property type="expression patterns" value="Expressed in colon and 14 other cell types or tissues"/>
</dbReference>
<dbReference type="GO" id="GO:0005829">
    <property type="term" value="C:cytosol"/>
    <property type="evidence" value="ECO:0000318"/>
    <property type="project" value="GO_Central"/>
</dbReference>
<dbReference type="GO" id="GO:0008379">
    <property type="term" value="F:thioredoxin peroxidase activity"/>
    <property type="evidence" value="ECO:0000318"/>
    <property type="project" value="GO_Central"/>
</dbReference>
<dbReference type="GO" id="GO:0045454">
    <property type="term" value="P:cell redox homeostasis"/>
    <property type="evidence" value="ECO:0000318"/>
    <property type="project" value="GO_Central"/>
</dbReference>
<dbReference type="GO" id="GO:0042744">
    <property type="term" value="P:hydrogen peroxide catabolic process"/>
    <property type="evidence" value="ECO:0000318"/>
    <property type="project" value="GO_Central"/>
</dbReference>
<dbReference type="GO" id="GO:0045321">
    <property type="term" value="P:leukocyte activation"/>
    <property type="evidence" value="ECO:0000318"/>
    <property type="project" value="GO_Central"/>
</dbReference>
<dbReference type="GO" id="GO:0019430">
    <property type="term" value="P:removal of superoxide radicals"/>
    <property type="evidence" value="ECO:0000318"/>
    <property type="project" value="GO_Central"/>
</dbReference>
<dbReference type="GO" id="GO:0006979">
    <property type="term" value="P:response to oxidative stress"/>
    <property type="evidence" value="ECO:0000318"/>
    <property type="project" value="GO_Central"/>
</dbReference>
<dbReference type="CDD" id="cd03015">
    <property type="entry name" value="PRX_Typ2cys"/>
    <property type="match status" value="1"/>
</dbReference>
<dbReference type="FunFam" id="3.40.30.10:FF:000003">
    <property type="entry name" value="Peroxiredoxin 1"/>
    <property type="match status" value="1"/>
</dbReference>
<dbReference type="Gene3D" id="3.40.30.10">
    <property type="entry name" value="Glutaredoxin"/>
    <property type="match status" value="1"/>
</dbReference>
<dbReference type="InterPro" id="IPR000866">
    <property type="entry name" value="AhpC/TSA"/>
</dbReference>
<dbReference type="InterPro" id="IPR050217">
    <property type="entry name" value="Peroxiredoxin"/>
</dbReference>
<dbReference type="InterPro" id="IPR024706">
    <property type="entry name" value="Peroxiredoxin_AhpC-typ"/>
</dbReference>
<dbReference type="InterPro" id="IPR019479">
    <property type="entry name" value="Peroxiredoxin_C"/>
</dbReference>
<dbReference type="InterPro" id="IPR036249">
    <property type="entry name" value="Thioredoxin-like_sf"/>
</dbReference>
<dbReference type="InterPro" id="IPR013766">
    <property type="entry name" value="Thioredoxin_domain"/>
</dbReference>
<dbReference type="PANTHER" id="PTHR10681:SF111">
    <property type="entry name" value="PEROXIREDOXIN-1"/>
    <property type="match status" value="1"/>
</dbReference>
<dbReference type="PANTHER" id="PTHR10681">
    <property type="entry name" value="THIOREDOXIN PEROXIDASE"/>
    <property type="match status" value="1"/>
</dbReference>
<dbReference type="Pfam" id="PF10417">
    <property type="entry name" value="1-cysPrx_C"/>
    <property type="match status" value="1"/>
</dbReference>
<dbReference type="Pfam" id="PF00578">
    <property type="entry name" value="AhpC-TSA"/>
    <property type="match status" value="1"/>
</dbReference>
<dbReference type="PIRSF" id="PIRSF000239">
    <property type="entry name" value="AHPC"/>
    <property type="match status" value="1"/>
</dbReference>
<dbReference type="SUPFAM" id="SSF52833">
    <property type="entry name" value="Thioredoxin-like"/>
    <property type="match status" value="1"/>
</dbReference>
<dbReference type="PROSITE" id="PS51352">
    <property type="entry name" value="THIOREDOXIN_2"/>
    <property type="match status" value="1"/>
</dbReference>
<organism>
    <name type="scientific">Gallus gallus</name>
    <name type="common">Chicken</name>
    <dbReference type="NCBI Taxonomy" id="9031"/>
    <lineage>
        <taxon>Eukaryota</taxon>
        <taxon>Metazoa</taxon>
        <taxon>Chordata</taxon>
        <taxon>Craniata</taxon>
        <taxon>Vertebrata</taxon>
        <taxon>Euteleostomi</taxon>
        <taxon>Archelosauria</taxon>
        <taxon>Archosauria</taxon>
        <taxon>Dinosauria</taxon>
        <taxon>Saurischia</taxon>
        <taxon>Theropoda</taxon>
        <taxon>Coelurosauria</taxon>
        <taxon>Aves</taxon>
        <taxon>Neognathae</taxon>
        <taxon>Galloanserae</taxon>
        <taxon>Galliformes</taxon>
        <taxon>Phasianidae</taxon>
        <taxon>Phasianinae</taxon>
        <taxon>Gallus</taxon>
    </lineage>
</organism>
<protein>
    <recommendedName>
        <fullName>Peroxiredoxin-1</fullName>
        <ecNumber evidence="1">1.11.1.24</ecNumber>
    </recommendedName>
    <alternativeName>
        <fullName evidence="4">Thioredoxin-dependent peroxiredoxin 1</fullName>
    </alternativeName>
</protein>
<sequence length="199" mass="22315">MSSGKAFIGKPAPDFTATAVMPDGQFKDIKLSDYRGKYVVFFFYPLDFTFVCPTEIIAYSDRADEFKKINCEIIGASVDSHFCHLAWINTPKKQGGLGTMKIPLVSDTKRVIAKDYGVLKEDEGIAYRGLFIIDEKGILRQITINDLPVGRSVDETLRLVQAFQFTDKHGEVCPAGWKPGSDTIKPDVQKSKEYFSKQK</sequence>
<proteinExistence type="evidence at protein level"/>
<accession>P0CB50</accession>
<feature type="chain" id="PRO_0000387961" description="Peroxiredoxin-1">
    <location>
        <begin position="1"/>
        <end position="199"/>
    </location>
</feature>
<feature type="domain" description="Thioredoxin" evidence="2">
    <location>
        <begin position="6"/>
        <end position="165"/>
    </location>
</feature>
<feature type="active site" description="Cysteine sulfenic acid (-SOH) intermediate" evidence="1">
    <location>
        <position position="52"/>
    </location>
</feature>
<feature type="disulfide bond" description="Interchain (with C-173); in linked form" evidence="1">
    <location>
        <position position="52"/>
    </location>
</feature>
<feature type="disulfide bond" description="Interchain (with C-52); in linked form" evidence="1">
    <location>
        <position position="173"/>
    </location>
</feature>
<feature type="mutagenesis site" description="Abolishes the ability to form a mixed-disulfide with GDPD5; when associated with S-173." evidence="3">
    <original>C</original>
    <variation>S</variation>
    <location>
        <position position="52"/>
    </location>
</feature>
<feature type="mutagenesis site" description="Abolishes the ability to form a mixed-disulfide with GDPD5; when associated with S-52." evidence="3">
    <original>C</original>
    <variation>S</variation>
    <location>
        <position position="173"/>
    </location>
</feature>